<gene>
    <name type="primary">hisA</name>
</gene>
<protein>
    <recommendedName>
        <fullName>1-(5-phosphoribosyl)-5-[(5-phosphoribosylamino)methylideneamino] imidazole-4-carboxamide isomerase</fullName>
        <ecNumber>5.3.1.16</ecNumber>
    </recommendedName>
    <alternativeName>
        <fullName>Phosphoribosylformimino-5-aminoimidazole carboxamide ribotide isomerase</fullName>
    </alternativeName>
</protein>
<comment type="catalytic activity">
    <reaction>
        <text>1-(5-phospho-beta-D-ribosyl)-5-[(5-phospho-beta-D-ribosylamino)methylideneamino]imidazole-4-carboxamide = 5-[(5-phospho-1-deoxy-D-ribulos-1-ylimino)methylamino]-1-(5-phospho-beta-D-ribosyl)imidazole-4-carboxamide</text>
        <dbReference type="Rhea" id="RHEA:15469"/>
        <dbReference type="ChEBI" id="CHEBI:58435"/>
        <dbReference type="ChEBI" id="CHEBI:58525"/>
        <dbReference type="EC" id="5.3.1.16"/>
    </reaction>
</comment>
<comment type="pathway">
    <text>Amino-acid biosynthesis; L-histidine biosynthesis; L-histidine from 5-phospho-alpha-D-ribose 1-diphosphate: step 4/9.</text>
</comment>
<comment type="subcellular location">
    <subcellularLocation>
        <location evidence="1">Cytoplasm</location>
    </subcellularLocation>
</comment>
<comment type="similarity">
    <text evidence="2">Belongs to the HisA/HisF family.</text>
</comment>
<reference key="1">
    <citation type="journal article" date="1989" name="Mol. Gen. Genet.">
        <title>Cloning of histidine genes of Azospirillum brasilense: organization of the ABFH gene cluster and nucleotide sequence of the hisB gene.</title>
        <authorList>
            <person name="Fani R."/>
            <person name="Bazzicalupo M."/>
            <person name="Damiani G."/>
            <person name="Bianchi A."/>
            <person name="Schipani C."/>
            <person name="Sgaramella V."/>
            <person name="Polsinelli M."/>
        </authorList>
    </citation>
    <scope>NUCLEOTIDE SEQUENCE [GENOMIC DNA]</scope>
    <source>
        <strain>Sp6</strain>
    </source>
</reference>
<dbReference type="EC" id="5.3.1.16"/>
<dbReference type="EMBL" id="X61207">
    <property type="protein sequence ID" value="CAA43518.1"/>
    <property type="molecule type" value="Genomic_DNA"/>
</dbReference>
<dbReference type="PIR" id="S16801">
    <property type="entry name" value="S16801"/>
</dbReference>
<dbReference type="SMR" id="P26720"/>
<dbReference type="UniPathway" id="UPA00031">
    <property type="reaction ID" value="UER00009"/>
</dbReference>
<dbReference type="GO" id="GO:0005737">
    <property type="term" value="C:cytoplasm"/>
    <property type="evidence" value="ECO:0007669"/>
    <property type="project" value="UniProtKB-SubCell"/>
</dbReference>
<dbReference type="GO" id="GO:0003949">
    <property type="term" value="F:1-(5-phosphoribosyl)-5-[(5-phosphoribosylamino)methylideneamino]imidazole-4-carboxamide isomerase activity"/>
    <property type="evidence" value="ECO:0007669"/>
    <property type="project" value="UniProtKB-UniRule"/>
</dbReference>
<dbReference type="GO" id="GO:0000105">
    <property type="term" value="P:L-histidine biosynthetic process"/>
    <property type="evidence" value="ECO:0007669"/>
    <property type="project" value="UniProtKB-UniRule"/>
</dbReference>
<dbReference type="GO" id="GO:0000162">
    <property type="term" value="P:L-tryptophan biosynthetic process"/>
    <property type="evidence" value="ECO:0007669"/>
    <property type="project" value="TreeGrafter"/>
</dbReference>
<dbReference type="CDD" id="cd04732">
    <property type="entry name" value="HisA"/>
    <property type="match status" value="1"/>
</dbReference>
<dbReference type="FunFam" id="3.20.20.70:FF:000009">
    <property type="entry name" value="1-(5-phosphoribosyl)-5-[(5-phosphoribosylamino)methylideneamino] imidazole-4-carboxamide isomerase"/>
    <property type="match status" value="1"/>
</dbReference>
<dbReference type="Gene3D" id="3.20.20.70">
    <property type="entry name" value="Aldolase class I"/>
    <property type="match status" value="1"/>
</dbReference>
<dbReference type="HAMAP" id="MF_01014">
    <property type="entry name" value="HisA"/>
    <property type="match status" value="1"/>
</dbReference>
<dbReference type="InterPro" id="IPR013785">
    <property type="entry name" value="Aldolase_TIM"/>
</dbReference>
<dbReference type="InterPro" id="IPR006062">
    <property type="entry name" value="His_biosynth"/>
</dbReference>
<dbReference type="InterPro" id="IPR006063">
    <property type="entry name" value="HisA_bact_arch"/>
</dbReference>
<dbReference type="InterPro" id="IPR044524">
    <property type="entry name" value="Isoase_HisA-like"/>
</dbReference>
<dbReference type="InterPro" id="IPR023016">
    <property type="entry name" value="Isoase_HisA-like_bact"/>
</dbReference>
<dbReference type="InterPro" id="IPR011060">
    <property type="entry name" value="RibuloseP-bd_barrel"/>
</dbReference>
<dbReference type="NCBIfam" id="TIGR00007">
    <property type="entry name" value="1-(5-phosphoribosyl)-5-[(5-phosphoribosylamino)methylideneamino]imidazole-4-carboxamide isomerase"/>
    <property type="match status" value="1"/>
</dbReference>
<dbReference type="PANTHER" id="PTHR43090">
    <property type="entry name" value="1-(5-PHOSPHORIBOSYL)-5-[(5-PHOSPHORIBOSYLAMINO)METHYLIDENEAMINO] IMIDAZOLE-4-CARBOXAMIDE ISOMERASE"/>
    <property type="match status" value="1"/>
</dbReference>
<dbReference type="PANTHER" id="PTHR43090:SF2">
    <property type="entry name" value="1-(5-PHOSPHORIBOSYL)-5-[(5-PHOSPHORIBOSYLAMINO)METHYLIDENEAMINO] IMIDAZOLE-4-CARBOXAMIDE ISOMERASE"/>
    <property type="match status" value="1"/>
</dbReference>
<dbReference type="Pfam" id="PF00977">
    <property type="entry name" value="His_biosynth"/>
    <property type="match status" value="1"/>
</dbReference>
<dbReference type="SUPFAM" id="SSF51366">
    <property type="entry name" value="Ribulose-phoshate binding barrel"/>
    <property type="match status" value="1"/>
</dbReference>
<evidence type="ECO:0000250" key="1"/>
<evidence type="ECO:0000305" key="2"/>
<sequence>MIIYPAIDLKDGACVRLLRGEMSQATVFNTEPADQARLFESQGFEWLHLVDLNGAFEGKPVNGKAVESILGAVTVPVQLGGGIRDLKTIALWLEKGVSRVILGTVALREPELVREARREFPGKVAVGIDAREGYVAVAGWAETSTIKALDLALKFEDSGVAAIIYTDINRDGAMGGVNVEATSDLAFHLTTPVIASGAVSSIDDLIALKKEEDTGIQGVICGRALYDGRIDPKTALDLLSSVSVSGTPVTGKAG</sequence>
<keyword id="KW-0028">Amino-acid biosynthesis</keyword>
<keyword id="KW-0963">Cytoplasm</keyword>
<keyword id="KW-0368">Histidine biosynthesis</keyword>
<keyword id="KW-0413">Isomerase</keyword>
<proteinExistence type="inferred from homology"/>
<name>HIS4_AZOBR</name>
<accession>P26720</accession>
<feature type="chain" id="PRO_0000141968" description="1-(5-phosphoribosyl)-5-[(5-phosphoribosylamino)methylideneamino] imidazole-4-carboxamide isomerase">
    <location>
        <begin position="1"/>
        <end position="254"/>
    </location>
</feature>
<feature type="active site" description="Proton acceptor" evidence="1">
    <location>
        <position position="8"/>
    </location>
</feature>
<feature type="active site" description="Proton donor" evidence="1">
    <location>
        <position position="129"/>
    </location>
</feature>
<organism>
    <name type="scientific">Azospirillum brasilense</name>
    <dbReference type="NCBI Taxonomy" id="192"/>
    <lineage>
        <taxon>Bacteria</taxon>
        <taxon>Pseudomonadati</taxon>
        <taxon>Pseudomonadota</taxon>
        <taxon>Alphaproteobacteria</taxon>
        <taxon>Rhodospirillales</taxon>
        <taxon>Azospirillaceae</taxon>
        <taxon>Azospirillum</taxon>
    </lineage>
</organism>